<feature type="chain" id="PRO_0000359002" description="Acetyl-coenzyme A carboxylase carboxyl transferase subunit beta">
    <location>
        <begin position="1"/>
        <end position="310"/>
    </location>
</feature>
<feature type="domain" description="CoA carboxyltransferase N-terminal" evidence="2">
    <location>
        <begin position="27"/>
        <end position="296"/>
    </location>
</feature>
<feature type="zinc finger region" description="C4-type" evidence="1">
    <location>
        <begin position="31"/>
        <end position="53"/>
    </location>
</feature>
<feature type="region of interest" description="Disordered" evidence="3">
    <location>
        <begin position="285"/>
        <end position="310"/>
    </location>
</feature>
<feature type="compositionally biased region" description="Acidic residues" evidence="3">
    <location>
        <begin position="287"/>
        <end position="310"/>
    </location>
</feature>
<feature type="binding site" evidence="1">
    <location>
        <position position="31"/>
    </location>
    <ligand>
        <name>Zn(2+)</name>
        <dbReference type="ChEBI" id="CHEBI:29105"/>
    </ligand>
</feature>
<feature type="binding site" evidence="1">
    <location>
        <position position="34"/>
    </location>
    <ligand>
        <name>Zn(2+)</name>
        <dbReference type="ChEBI" id="CHEBI:29105"/>
    </ligand>
</feature>
<feature type="binding site" evidence="1">
    <location>
        <position position="50"/>
    </location>
    <ligand>
        <name>Zn(2+)</name>
        <dbReference type="ChEBI" id="CHEBI:29105"/>
    </ligand>
</feature>
<feature type="binding site" evidence="1">
    <location>
        <position position="53"/>
    </location>
    <ligand>
        <name>Zn(2+)</name>
        <dbReference type="ChEBI" id="CHEBI:29105"/>
    </ligand>
</feature>
<name>ACCD_HAHCH</name>
<accession>Q2SJC9</accession>
<organism>
    <name type="scientific">Hahella chejuensis (strain KCTC 2396)</name>
    <dbReference type="NCBI Taxonomy" id="349521"/>
    <lineage>
        <taxon>Bacteria</taxon>
        <taxon>Pseudomonadati</taxon>
        <taxon>Pseudomonadota</taxon>
        <taxon>Gammaproteobacteria</taxon>
        <taxon>Oceanospirillales</taxon>
        <taxon>Hahellaceae</taxon>
        <taxon>Hahella</taxon>
    </lineage>
</organism>
<keyword id="KW-0067">ATP-binding</keyword>
<keyword id="KW-0963">Cytoplasm</keyword>
<keyword id="KW-0275">Fatty acid biosynthesis</keyword>
<keyword id="KW-0276">Fatty acid metabolism</keyword>
<keyword id="KW-0444">Lipid biosynthesis</keyword>
<keyword id="KW-0443">Lipid metabolism</keyword>
<keyword id="KW-0479">Metal-binding</keyword>
<keyword id="KW-0547">Nucleotide-binding</keyword>
<keyword id="KW-1185">Reference proteome</keyword>
<keyword id="KW-0808">Transferase</keyword>
<keyword id="KW-0862">Zinc</keyword>
<keyword id="KW-0863">Zinc-finger</keyword>
<sequence>MSNWLEKIIPGMGGAQSKHKSNVPEGLWKKCPKCSAVLYRPELEKNLDVCPKCQHHMRISARRRIDIFLDGADRMEIAPELEPADRLKFKDTKRYKDRLVSNQKATGEKDALVAFKGTVAGVPVVAVAFEFNFLGGSMGAVVGEKFVRAVNVCLEENRALICFSASGGARMQEALISLMQMAKTAAALEVMKQRGLPYISVMTDPVFGGVSASLAMLGDLNVAEPNALIGFAGPRVIEQTVREKLPEGFQRSEFLLEHGALDMILSRNQLRRRLSMLISKMMKLPEPEFENEEELEEEEMERPEPPDNVE</sequence>
<gene>
    <name evidence="1" type="primary">accD</name>
    <name type="ordered locus">HCH_02438</name>
</gene>
<protein>
    <recommendedName>
        <fullName evidence="1">Acetyl-coenzyme A carboxylase carboxyl transferase subunit beta</fullName>
        <shortName evidence="1">ACCase subunit beta</shortName>
        <shortName evidence="1">Acetyl-CoA carboxylase carboxyltransferase subunit beta</shortName>
        <ecNumber evidence="1">2.1.3.15</ecNumber>
    </recommendedName>
</protein>
<evidence type="ECO:0000255" key="1">
    <source>
        <dbReference type="HAMAP-Rule" id="MF_01395"/>
    </source>
</evidence>
<evidence type="ECO:0000255" key="2">
    <source>
        <dbReference type="PROSITE-ProRule" id="PRU01136"/>
    </source>
</evidence>
<evidence type="ECO:0000256" key="3">
    <source>
        <dbReference type="SAM" id="MobiDB-lite"/>
    </source>
</evidence>
<comment type="function">
    <text evidence="1">Component of the acetyl coenzyme A carboxylase (ACC) complex. Biotin carboxylase (BC) catalyzes the carboxylation of biotin on its carrier protein (BCCP) and then the CO(2) group is transferred by the transcarboxylase to acetyl-CoA to form malonyl-CoA.</text>
</comment>
<comment type="catalytic activity">
    <reaction evidence="1">
        <text>N(6)-carboxybiotinyl-L-lysyl-[protein] + acetyl-CoA = N(6)-biotinyl-L-lysyl-[protein] + malonyl-CoA</text>
        <dbReference type="Rhea" id="RHEA:54728"/>
        <dbReference type="Rhea" id="RHEA-COMP:10505"/>
        <dbReference type="Rhea" id="RHEA-COMP:10506"/>
        <dbReference type="ChEBI" id="CHEBI:57288"/>
        <dbReference type="ChEBI" id="CHEBI:57384"/>
        <dbReference type="ChEBI" id="CHEBI:83144"/>
        <dbReference type="ChEBI" id="CHEBI:83145"/>
        <dbReference type="EC" id="2.1.3.15"/>
    </reaction>
</comment>
<comment type="cofactor">
    <cofactor evidence="1">
        <name>Zn(2+)</name>
        <dbReference type="ChEBI" id="CHEBI:29105"/>
    </cofactor>
    <text evidence="1">Binds 1 zinc ion per subunit.</text>
</comment>
<comment type="pathway">
    <text evidence="1">Lipid metabolism; malonyl-CoA biosynthesis; malonyl-CoA from acetyl-CoA: step 1/1.</text>
</comment>
<comment type="subunit">
    <text evidence="1">Acetyl-CoA carboxylase is a heterohexamer composed of biotin carboxyl carrier protein (AccB), biotin carboxylase (AccC) and two subunits each of ACCase subunit alpha (AccA) and ACCase subunit beta (AccD).</text>
</comment>
<comment type="subcellular location">
    <subcellularLocation>
        <location evidence="1">Cytoplasm</location>
    </subcellularLocation>
</comment>
<comment type="similarity">
    <text evidence="1">Belongs to the AccD/PCCB family.</text>
</comment>
<dbReference type="EC" id="2.1.3.15" evidence="1"/>
<dbReference type="EMBL" id="CP000155">
    <property type="protein sequence ID" value="ABC29245.1"/>
    <property type="molecule type" value="Genomic_DNA"/>
</dbReference>
<dbReference type="RefSeq" id="WP_011396314.1">
    <property type="nucleotide sequence ID" value="NC_007645.1"/>
</dbReference>
<dbReference type="SMR" id="Q2SJC9"/>
<dbReference type="STRING" id="349521.HCH_02438"/>
<dbReference type="KEGG" id="hch:HCH_02438"/>
<dbReference type="eggNOG" id="COG0777">
    <property type="taxonomic scope" value="Bacteria"/>
</dbReference>
<dbReference type="HOGENOM" id="CLU_015486_1_0_6"/>
<dbReference type="OrthoDB" id="9772975at2"/>
<dbReference type="UniPathway" id="UPA00655">
    <property type="reaction ID" value="UER00711"/>
</dbReference>
<dbReference type="Proteomes" id="UP000000238">
    <property type="component" value="Chromosome"/>
</dbReference>
<dbReference type="GO" id="GO:0009329">
    <property type="term" value="C:acetate CoA-transferase complex"/>
    <property type="evidence" value="ECO:0007669"/>
    <property type="project" value="TreeGrafter"/>
</dbReference>
<dbReference type="GO" id="GO:0003989">
    <property type="term" value="F:acetyl-CoA carboxylase activity"/>
    <property type="evidence" value="ECO:0007669"/>
    <property type="project" value="InterPro"/>
</dbReference>
<dbReference type="GO" id="GO:0005524">
    <property type="term" value="F:ATP binding"/>
    <property type="evidence" value="ECO:0007669"/>
    <property type="project" value="UniProtKB-KW"/>
</dbReference>
<dbReference type="GO" id="GO:0016743">
    <property type="term" value="F:carboxyl- or carbamoyltransferase activity"/>
    <property type="evidence" value="ECO:0007669"/>
    <property type="project" value="UniProtKB-UniRule"/>
</dbReference>
<dbReference type="GO" id="GO:0008270">
    <property type="term" value="F:zinc ion binding"/>
    <property type="evidence" value="ECO:0007669"/>
    <property type="project" value="UniProtKB-UniRule"/>
</dbReference>
<dbReference type="GO" id="GO:0006633">
    <property type="term" value="P:fatty acid biosynthetic process"/>
    <property type="evidence" value="ECO:0007669"/>
    <property type="project" value="UniProtKB-KW"/>
</dbReference>
<dbReference type="GO" id="GO:2001295">
    <property type="term" value="P:malonyl-CoA biosynthetic process"/>
    <property type="evidence" value="ECO:0007669"/>
    <property type="project" value="UniProtKB-UniRule"/>
</dbReference>
<dbReference type="Gene3D" id="3.90.226.10">
    <property type="entry name" value="2-enoyl-CoA Hydratase, Chain A, domain 1"/>
    <property type="match status" value="1"/>
</dbReference>
<dbReference type="HAMAP" id="MF_01395">
    <property type="entry name" value="AcetylCoA_CT_beta"/>
    <property type="match status" value="1"/>
</dbReference>
<dbReference type="InterPro" id="IPR034733">
    <property type="entry name" value="AcCoA_carboxyl_beta"/>
</dbReference>
<dbReference type="InterPro" id="IPR000438">
    <property type="entry name" value="Acetyl_CoA_COase_Trfase_b_su"/>
</dbReference>
<dbReference type="InterPro" id="IPR029045">
    <property type="entry name" value="ClpP/crotonase-like_dom_sf"/>
</dbReference>
<dbReference type="InterPro" id="IPR011762">
    <property type="entry name" value="COA_CT_N"/>
</dbReference>
<dbReference type="InterPro" id="IPR041010">
    <property type="entry name" value="Znf-ACC"/>
</dbReference>
<dbReference type="NCBIfam" id="TIGR00515">
    <property type="entry name" value="accD"/>
    <property type="match status" value="1"/>
</dbReference>
<dbReference type="PANTHER" id="PTHR42995">
    <property type="entry name" value="ACETYL-COENZYME A CARBOXYLASE CARBOXYL TRANSFERASE SUBUNIT BETA, CHLOROPLASTIC"/>
    <property type="match status" value="1"/>
</dbReference>
<dbReference type="PANTHER" id="PTHR42995:SF5">
    <property type="entry name" value="ACETYL-COENZYME A CARBOXYLASE CARBOXYL TRANSFERASE SUBUNIT BETA, CHLOROPLASTIC"/>
    <property type="match status" value="1"/>
</dbReference>
<dbReference type="Pfam" id="PF01039">
    <property type="entry name" value="Carboxyl_trans"/>
    <property type="match status" value="1"/>
</dbReference>
<dbReference type="Pfam" id="PF17848">
    <property type="entry name" value="Zn_ribbon_ACC"/>
    <property type="match status" value="1"/>
</dbReference>
<dbReference type="PRINTS" id="PR01070">
    <property type="entry name" value="ACCCTRFRASEB"/>
</dbReference>
<dbReference type="SUPFAM" id="SSF52096">
    <property type="entry name" value="ClpP/crotonase"/>
    <property type="match status" value="1"/>
</dbReference>
<dbReference type="PROSITE" id="PS50980">
    <property type="entry name" value="COA_CT_NTER"/>
    <property type="match status" value="1"/>
</dbReference>
<proteinExistence type="inferred from homology"/>
<reference key="1">
    <citation type="journal article" date="2005" name="Nucleic Acids Res.">
        <title>Genomic blueprint of Hahella chejuensis, a marine microbe producing an algicidal agent.</title>
        <authorList>
            <person name="Jeong H."/>
            <person name="Yim J.H."/>
            <person name="Lee C."/>
            <person name="Choi S.-H."/>
            <person name="Park Y.K."/>
            <person name="Yoon S.H."/>
            <person name="Hur C.-G."/>
            <person name="Kang H.-Y."/>
            <person name="Kim D."/>
            <person name="Lee H.H."/>
            <person name="Park K.H."/>
            <person name="Park S.-H."/>
            <person name="Park H.-S."/>
            <person name="Lee H.K."/>
            <person name="Oh T.K."/>
            <person name="Kim J.F."/>
        </authorList>
    </citation>
    <scope>NUCLEOTIDE SEQUENCE [LARGE SCALE GENOMIC DNA]</scope>
    <source>
        <strain>KCTC 2396</strain>
    </source>
</reference>